<evidence type="ECO:0000250" key="1">
    <source>
        <dbReference type="UniProtKB" id="Q1XH05"/>
    </source>
</evidence>
<evidence type="ECO:0000250" key="2">
    <source>
        <dbReference type="UniProtKB" id="Q7XSK0"/>
    </source>
</evidence>
<evidence type="ECO:0000250" key="3">
    <source>
        <dbReference type="UniProtKB" id="Q9SPP9"/>
    </source>
</evidence>
<evidence type="ECO:0000269" key="4">
    <source>
    </source>
</evidence>
<evidence type="ECO:0000269" key="5">
    <source>
    </source>
</evidence>
<evidence type="ECO:0000269" key="6">
    <source>
    </source>
</evidence>
<evidence type="ECO:0000269" key="7">
    <source>
    </source>
</evidence>
<evidence type="ECO:0000269" key="8">
    <source>
    </source>
</evidence>
<evidence type="ECO:0000305" key="9"/>
<feature type="transit peptide" description="Chloroplast" evidence="6 7 8">
    <location>
        <begin position="1"/>
        <end position="55"/>
    </location>
</feature>
<feature type="chain" id="PRO_5000146241" description="Avenacosidase 1">
    <location>
        <begin position="56"/>
        <end position="574"/>
    </location>
</feature>
<feature type="active site" description="Proton donor" evidence="2">
    <location>
        <position position="238"/>
    </location>
</feature>
<feature type="active site" description="Nucleophile" evidence="2">
    <location>
        <position position="454"/>
    </location>
</feature>
<feature type="binding site" evidence="2">
    <location>
        <position position="88"/>
    </location>
    <ligand>
        <name>a beta-D-glucoside</name>
        <dbReference type="ChEBI" id="CHEBI:22798"/>
    </ligand>
</feature>
<feature type="binding site" evidence="2">
    <location>
        <position position="192"/>
    </location>
    <ligand>
        <name>a beta-D-glucoside</name>
        <dbReference type="ChEBI" id="CHEBI:22798"/>
    </ligand>
</feature>
<feature type="binding site" evidence="2">
    <location>
        <begin position="237"/>
        <end position="238"/>
    </location>
    <ligand>
        <name>a beta-D-glucoside</name>
        <dbReference type="ChEBI" id="CHEBI:22798"/>
    </ligand>
</feature>
<feature type="binding site" evidence="2">
    <location>
        <position position="381"/>
    </location>
    <ligand>
        <name>a beta-D-glucoside</name>
        <dbReference type="ChEBI" id="CHEBI:22798"/>
    </ligand>
</feature>
<feature type="binding site" evidence="3">
    <location>
        <position position="454"/>
    </location>
    <ligand>
        <name>a beta-D-glucoside</name>
        <dbReference type="ChEBI" id="CHEBI:22798"/>
    </ligand>
</feature>
<feature type="binding site" evidence="2">
    <location>
        <position position="505"/>
    </location>
    <ligand>
        <name>a beta-D-glucoside</name>
        <dbReference type="ChEBI" id="CHEBI:22798"/>
    </ligand>
</feature>
<feature type="binding site" evidence="2">
    <location>
        <begin position="512"/>
        <end position="513"/>
    </location>
    <ligand>
        <name>a beta-D-glucoside</name>
        <dbReference type="ChEBI" id="CHEBI:22798"/>
    </ligand>
</feature>
<feature type="binding site" evidence="1">
    <location>
        <position position="521"/>
    </location>
    <ligand>
        <name>a beta-D-glucoside</name>
        <dbReference type="ChEBI" id="CHEBI:22798"/>
    </ligand>
</feature>
<feature type="disulfide bond" evidence="2">
    <location>
        <begin position="258"/>
        <end position="264"/>
    </location>
</feature>
<proteinExistence type="evidence at protein level"/>
<comment type="function">
    <text evidence="5 6 7">Beta-glucosidase acting as a preformed defense system. Hydrolyzes the bisdesmosides avenacosides A and B to 26-desgluco-avenacosides exhibiting fungicidal activity. Can use beta-fucoside &gt; beta-glucoside &gt; beta-galactoside &gt; beta-xyloside as substrates, but not alpha-glycosides, beta-thioglucosides and disaccharides.</text>
</comment>
<comment type="catalytic activity">
    <reaction evidence="4 5 6 8">
        <text>avenacoside B + H2O = 26-desgluco-avenacoside B + D-glucose</text>
        <dbReference type="Rhea" id="RHEA:38911"/>
        <dbReference type="ChEBI" id="CHEBI:2938"/>
        <dbReference type="ChEBI" id="CHEBI:4167"/>
        <dbReference type="ChEBI" id="CHEBI:15377"/>
        <dbReference type="ChEBI" id="CHEBI:75931"/>
        <dbReference type="EC" id="3.2.1.188"/>
    </reaction>
</comment>
<comment type="activity regulation">
    <text evidence="8">Inhibited by N-(3-Dimethylaminopropyl)-N'-ethylcarbodiimide hydrochloride (EDC).</text>
</comment>
<comment type="biophysicochemical properties">
    <kinetics>
        <KM evidence="4 5 8">2.2 mM for p-nitrophenyl-beta-D-glucopyranoside (with native enzyme)</KM>
        <KM evidence="4 5 8">1.57 mM for p-nitrophenyl-beta-D-glucopyranoside (with homomultimeric recombinant enzyme)</KM>
        <KM evidence="4 5 8">1.48 mM for p-nitrophenyl-beta-D-glucopyranoside (with heteromultimeric recombinant enzyme)</KM>
        <KM evidence="4 5 8">12 uM for avenacosides (with native enzyme)</KM>
        <KM evidence="4 5 8">0.4 mM for genistin (with native enzyme)</KM>
        <text>The activity increases with rising aggregation of the enzyme. kcat is 982000 sec(-1) with avenacosides as substrate. kcat is 3090 sec(-1) with p-nitrophenyl-beta-D-glucopyranoside as substrate. kcat is 290 sec(-1) with genistin as substrate.</text>
    </kinetics>
    <phDependence>
        <text evidence="4 5 8">Optimum pH is 6.0.</text>
    </phDependence>
</comment>
<comment type="subunit">
    <text evidence="6 8">Homo- and heteromultimer with P60B in a 1:1 stoichiometry. Aggregates to form the fibrillar stromacentre.</text>
</comment>
<comment type="subcellular location">
    <subcellularLocation>
        <location evidence="5 6">Plastid</location>
        <location evidence="5 6">Chloroplast stroma</location>
    </subcellularLocation>
    <text>Found in a fibrillar spherulite called stromacentre.</text>
</comment>
<comment type="tissue specificity">
    <text evidence="6">Expressed in caryopses, coleoptiles, primary leaves, and etiolated and green seedlings, but not in roots.</text>
</comment>
<comment type="miscellaneous">
    <text>Long fibrillar homomultimers are formed by linear stacking of trimeric units. The multimerization of the enzyme promotes formation of a long central channel with narrow openings at the sides. The active sites are localized inside the tunnels, constraining the accessibility of substrates and products.</text>
</comment>
<comment type="similarity">
    <text evidence="9">Belongs to the glycosyl hydrolase 1 family.</text>
</comment>
<dbReference type="EC" id="3.2.1.188" evidence="4 5 6 8"/>
<dbReference type="EMBL" id="X78433">
    <property type="protein sequence ID" value="CAA55196.1"/>
    <property type="molecule type" value="mRNA"/>
</dbReference>
<dbReference type="PIR" id="S43128">
    <property type="entry name" value="S43128"/>
</dbReference>
<dbReference type="PIR" id="S45723">
    <property type="entry name" value="S45723"/>
</dbReference>
<dbReference type="PIR" id="S50756">
    <property type="entry name" value="S50756"/>
</dbReference>
<dbReference type="SMR" id="Q38786"/>
<dbReference type="CAZy" id="GH1">
    <property type="family name" value="Glycoside Hydrolase Family 1"/>
</dbReference>
<dbReference type="KEGG" id="ag:CAA55196"/>
<dbReference type="BRENDA" id="3.2.1.186">
    <property type="organism ID" value="588"/>
</dbReference>
<dbReference type="SABIO-RK" id="Q38786"/>
<dbReference type="GO" id="GO:0009507">
    <property type="term" value="C:chloroplast"/>
    <property type="evidence" value="ECO:0000314"/>
    <property type="project" value="UniProtKB"/>
</dbReference>
<dbReference type="GO" id="GO:0009570">
    <property type="term" value="C:chloroplast stroma"/>
    <property type="evidence" value="ECO:0007669"/>
    <property type="project" value="UniProtKB-SubCell"/>
</dbReference>
<dbReference type="GO" id="GO:0008422">
    <property type="term" value="F:beta-glucosidase activity"/>
    <property type="evidence" value="ECO:0000314"/>
    <property type="project" value="UniProtKB"/>
</dbReference>
<dbReference type="GO" id="GO:0042802">
    <property type="term" value="F:identical protein binding"/>
    <property type="evidence" value="ECO:0000314"/>
    <property type="project" value="UniProtKB"/>
</dbReference>
<dbReference type="GO" id="GO:0005975">
    <property type="term" value="P:carbohydrate metabolic process"/>
    <property type="evidence" value="ECO:0007669"/>
    <property type="project" value="InterPro"/>
</dbReference>
<dbReference type="GO" id="GO:0006952">
    <property type="term" value="P:defense response"/>
    <property type="evidence" value="ECO:0007669"/>
    <property type="project" value="UniProtKB-KW"/>
</dbReference>
<dbReference type="FunFam" id="3.20.20.80:FF:000041">
    <property type="entry name" value="Beta-glucosidase 7"/>
    <property type="match status" value="1"/>
</dbReference>
<dbReference type="Gene3D" id="3.20.20.80">
    <property type="entry name" value="Glycosidases"/>
    <property type="match status" value="1"/>
</dbReference>
<dbReference type="InterPro" id="IPR001360">
    <property type="entry name" value="Glyco_hydro_1"/>
</dbReference>
<dbReference type="InterPro" id="IPR033132">
    <property type="entry name" value="Glyco_hydro_1_N_CS"/>
</dbReference>
<dbReference type="InterPro" id="IPR017853">
    <property type="entry name" value="Glycoside_hydrolase_SF"/>
</dbReference>
<dbReference type="PANTHER" id="PTHR10353:SF326">
    <property type="entry name" value="4-HYDROXY-7-METHOXY-3-OXO-3,4-DIHYDRO-2H-1,4-BENZOXAZIN-2-YL GLUCOSIDE BETA-D-GLUCOSIDASE 1, CHLOROPLASTIC"/>
    <property type="match status" value="1"/>
</dbReference>
<dbReference type="PANTHER" id="PTHR10353">
    <property type="entry name" value="GLYCOSYL HYDROLASE"/>
    <property type="match status" value="1"/>
</dbReference>
<dbReference type="Pfam" id="PF00232">
    <property type="entry name" value="Glyco_hydro_1"/>
    <property type="match status" value="1"/>
</dbReference>
<dbReference type="PRINTS" id="PR00131">
    <property type="entry name" value="GLHYDRLASE1"/>
</dbReference>
<dbReference type="SUPFAM" id="SSF51445">
    <property type="entry name" value="(Trans)glycosidases"/>
    <property type="match status" value="1"/>
</dbReference>
<dbReference type="PROSITE" id="PS00653">
    <property type="entry name" value="GLYCOSYL_HYDROL_F1_2"/>
    <property type="match status" value="1"/>
</dbReference>
<protein>
    <recommendedName>
        <fullName>Avenacosidase 1</fullName>
        <ecNumber evidence="4 5 6 8">3.2.1.188</ecNumber>
    </recommendedName>
    <alternativeName>
        <fullName>26-desgluco-avenacosidase 1</fullName>
    </alternativeName>
    <alternativeName>
        <fullName>Protein As-Glu1</fullName>
    </alternativeName>
    <alternativeName>
        <fullName>Protein As-P60</fullName>
    </alternativeName>
</protein>
<gene>
    <name type="primary">P60A</name>
    <name type="synonym">GLU1</name>
</gene>
<accession>Q38786</accession>
<organism>
    <name type="scientific">Avena sativa</name>
    <name type="common">Oat</name>
    <dbReference type="NCBI Taxonomy" id="4498"/>
    <lineage>
        <taxon>Eukaryota</taxon>
        <taxon>Viridiplantae</taxon>
        <taxon>Streptophyta</taxon>
        <taxon>Embryophyta</taxon>
        <taxon>Tracheophyta</taxon>
        <taxon>Spermatophyta</taxon>
        <taxon>Magnoliopsida</taxon>
        <taxon>Liliopsida</taxon>
        <taxon>Poales</taxon>
        <taxon>Poaceae</taxon>
        <taxon>BOP clade</taxon>
        <taxon>Pooideae</taxon>
        <taxon>Poodae</taxon>
        <taxon>Poeae</taxon>
        <taxon>Poeae Chloroplast Group 1 (Aveneae type)</taxon>
        <taxon>Aveninae</taxon>
        <taxon>Avena</taxon>
    </lineage>
</organism>
<name>AVCO1_AVESA</name>
<keyword id="KW-0150">Chloroplast</keyword>
<keyword id="KW-0903">Direct protein sequencing</keyword>
<keyword id="KW-1015">Disulfide bond</keyword>
<keyword id="KW-0326">Glycosidase</keyword>
<keyword id="KW-0378">Hydrolase</keyword>
<keyword id="KW-0611">Plant defense</keyword>
<keyword id="KW-0934">Plastid</keyword>
<keyword id="KW-0809">Transit peptide</keyword>
<reference key="1">
    <citation type="journal article" date="1994" name="FEBS Lett.">
        <title>The amino acid sequence previously attributed to a protein kinase or a TCP1-related molecular chaperone and co-purified with phytochrome is a beta-glucosidase.</title>
        <authorList>
            <person name="Gus-Mayer S."/>
            <person name="Brunner H."/>
            <person name="Schneider-Poetsch H.A."/>
            <person name="Lottspeich F."/>
            <person name="Eckerskorn C."/>
            <person name="Grimm R."/>
            <person name="Rudiger W."/>
        </authorList>
    </citation>
    <scope>NUCLEOTIDE SEQUENCE [MRNA]</scope>
    <scope>PROTEIN SEQUENCE OF 56-68; 180-187; 191-197 AND 208-217</scope>
    <scope>FUNCTION</scope>
</reference>
<reference key="2">
    <citation type="journal article" date="1994" name="Plant Mol. Biol.">
        <title>Avenacosidase from oat: purification, sequence analysis and biochemical characterization of a new member of the BGA family of beta-glucosidases.</title>
        <authorList>
            <person name="Gus-Mayer S."/>
            <person name="Brunner H."/>
            <person name="Schneider-Poetsch H.A."/>
            <person name="Rudiger W."/>
        </authorList>
    </citation>
    <scope>PROTEIN SEQUENCE OF 56-71; 74-78; 180-187; 191-197; 208-217; 272-281; 346-348; 373-377 AND 439-448</scope>
    <scope>SEQUENCE REVISION TO 100</scope>
    <scope>FUNCTION</scope>
    <scope>CATALYTIC ACTIVITY</scope>
    <scope>SUBCELLULAR LOCATION</scope>
    <scope>SUBUNIT</scope>
    <scope>TISSUE SPECIFICITY</scope>
    <source>
        <strain>cv. Pirol</strain>
    </source>
</reference>
<reference key="3">
    <citation type="journal article" date="1998" name="Biochim. Biophys. Acta">
        <title>Subunit composition and oligomer stability of oat beta-glucosidase isozymes.</title>
        <authorList>
            <person name="Kim Y.W."/>
            <person name="Kim I.S."/>
        </authorList>
    </citation>
    <scope>PROTEIN SEQUENCE OF 56-75</scope>
    <scope>SUBUNIT</scope>
    <scope>CATALYTIC ACTIVITY</scope>
    <scope>BIOPHYSICOCHEMICAL PROPERTIES</scope>
    <scope>ACTIVITY REGULATION</scope>
    <source>
        <strain>cv. Garry</strain>
    </source>
</reference>
<reference key="4">
    <citation type="journal article" date="1988" name="Planta">
        <title>The stromacentre in Avena plastids: an aggregation of beta-glucosidase responsible for the activation of oat-leaf saponins.</title>
        <authorList>
            <person name="Nisius A."/>
        </authorList>
    </citation>
    <scope>FUNCTION</scope>
    <scope>CATALYTIC ACTIVITY</scope>
    <scope>BIOPHYSICOCHEMICAL PROPERTIES</scope>
    <scope>SUBCELLULAR LOCATION</scope>
</reference>
<reference key="5">
    <citation type="journal article" date="2005" name="J. Struct. Biol.">
        <title>Novel type of enzyme multimerization enhances substrate affinity of oat beta-glucosidase.</title>
        <authorList>
            <person name="Kim S.Y."/>
            <person name="Kim Y.W."/>
            <person name="Hegerl R."/>
            <person name="Cyrklaff M."/>
            <person name="Kim I.S."/>
        </authorList>
    </citation>
    <scope>3D-STRUCTURE MODELING</scope>
    <scope>CATALYTIC ACTIVITY</scope>
    <scope>BIOPHYSICOCHEMICAL PROPERTIES</scope>
</reference>
<sequence>MALLCSALSNSTHPSFRSHIGANSENLWHLSADPAQKSKRRCNLTLSSRAARISSALESAKQVKPWQVPKRDWFPPEFMFGAASAAYQIEGAWNEGGKGPSSWDNFCHSHPDRIMDKSNADVAANSYYMYKEDVRMLKEIGMDSYRFSISWPRILPKGTLDGGINHEGIQYYNDLLDCLIENGIKPYITLFHWDTPQALADEYKDFLDRRIVKDYTDYATVCFEHFGDKVKNWFTFNEPHSFCGLGYGTGLHAPGARCSAGMTCVIPEEDALRNPYIVGHNLLLAHAETVDVYNKFYKGDDGQIGMVLDVMAYEPYGNNFLDQQAQERAIDFHIGWFLEPMVRGDYPFSMRSLVGDRLPFFTKSEQEKLVSSYDFVGINYYTSRFAKHIDISPEFIPKINTDDVYSNPEVNDSNGIPIGPDVGMYFIYSYPKGLKNILLRMKEKYGNPPIYITENGTADMDGWGNPPMTDPLDDPLRIEYLQQHMTAIKEAIDLGRRTLRGHFTWSLIDNFEWSLGYLSRFGIVYIDRNDGCKRIMKKSAKWLKEFNGATKKLNNKILGASSCCSGVTHGGGTA</sequence>